<comment type="function">
    <text evidence="1">Allows bacterial pathogens to use the host heme as an iron source. Catalyzes the oxidative degradation of the heme macrocyclic porphyrin ring to the biliverdin in the presence of a suitable electron donor such as ascorbate or NADPH--cytochrome P450 reductase, with subsequent release of free iron.</text>
</comment>
<comment type="catalytic activity">
    <reaction evidence="1">
        <text>heme b + 3 reduced [NADPH--hemoprotein reductase] + 3 O2 = biliverdin IXalpha + CO + Fe(2+) + 3 oxidized [NADPH--hemoprotein reductase] + 3 H2O + H(+)</text>
        <dbReference type="Rhea" id="RHEA:21764"/>
        <dbReference type="Rhea" id="RHEA-COMP:11964"/>
        <dbReference type="Rhea" id="RHEA-COMP:11965"/>
        <dbReference type="ChEBI" id="CHEBI:15377"/>
        <dbReference type="ChEBI" id="CHEBI:15378"/>
        <dbReference type="ChEBI" id="CHEBI:15379"/>
        <dbReference type="ChEBI" id="CHEBI:17245"/>
        <dbReference type="ChEBI" id="CHEBI:29033"/>
        <dbReference type="ChEBI" id="CHEBI:57618"/>
        <dbReference type="ChEBI" id="CHEBI:57991"/>
        <dbReference type="ChEBI" id="CHEBI:58210"/>
        <dbReference type="ChEBI" id="CHEBI:60344"/>
        <dbReference type="EC" id="1.14.14.18"/>
    </reaction>
</comment>
<comment type="subunit">
    <text evidence="1">Homodimer.</text>
</comment>
<comment type="subcellular location">
    <subcellularLocation>
        <location evidence="1">Cytoplasm</location>
    </subcellularLocation>
</comment>
<comment type="similarity">
    <text evidence="1">Belongs to the antibiotic biosynthesis monooxygenase family. Heme-degrading monooxygenase IsdG subfamily.</text>
</comment>
<dbReference type="EC" id="1.14.14.18" evidence="1"/>
<dbReference type="EMBL" id="AE017355">
    <property type="protein sequence ID" value="AAT63659.1"/>
    <property type="molecule type" value="Genomic_DNA"/>
</dbReference>
<dbReference type="RefSeq" id="WP_000587817.1">
    <property type="nucleotide sequence ID" value="NC_005957.1"/>
</dbReference>
<dbReference type="RefSeq" id="YP_038591.1">
    <property type="nucleotide sequence ID" value="NC_005957.1"/>
</dbReference>
<dbReference type="SMR" id="Q6HCY5"/>
<dbReference type="KEGG" id="btk:BT9727_4276"/>
<dbReference type="PATRIC" id="fig|281309.8.peg.4557"/>
<dbReference type="HOGENOM" id="CLU_141544_2_1_9"/>
<dbReference type="Proteomes" id="UP000001301">
    <property type="component" value="Chromosome"/>
</dbReference>
<dbReference type="GO" id="GO:0005737">
    <property type="term" value="C:cytoplasm"/>
    <property type="evidence" value="ECO:0007669"/>
    <property type="project" value="UniProtKB-SubCell"/>
</dbReference>
<dbReference type="GO" id="GO:0020037">
    <property type="term" value="F:heme binding"/>
    <property type="evidence" value="ECO:0007669"/>
    <property type="project" value="UniProtKB-UniRule"/>
</dbReference>
<dbReference type="GO" id="GO:0004392">
    <property type="term" value="F:heme oxygenase (decyclizing) activity"/>
    <property type="evidence" value="ECO:0007669"/>
    <property type="project" value="UniProtKB-UniRule"/>
</dbReference>
<dbReference type="GO" id="GO:0005506">
    <property type="term" value="F:iron ion binding"/>
    <property type="evidence" value="ECO:0007669"/>
    <property type="project" value="UniProtKB-UniRule"/>
</dbReference>
<dbReference type="GO" id="GO:0042167">
    <property type="term" value="P:heme catabolic process"/>
    <property type="evidence" value="ECO:0007669"/>
    <property type="project" value="UniProtKB-UniRule"/>
</dbReference>
<dbReference type="GO" id="GO:0033212">
    <property type="term" value="P:iron import into cell"/>
    <property type="evidence" value="ECO:0007669"/>
    <property type="project" value="InterPro"/>
</dbReference>
<dbReference type="Gene3D" id="3.30.70.100">
    <property type="match status" value="1"/>
</dbReference>
<dbReference type="HAMAP" id="MF_01272">
    <property type="entry name" value="Heme_degrading_monooxygenase"/>
    <property type="match status" value="1"/>
</dbReference>
<dbReference type="InterPro" id="IPR007138">
    <property type="entry name" value="ABM_dom"/>
</dbReference>
<dbReference type="InterPro" id="IPR011008">
    <property type="entry name" value="Dimeric_a/b-barrel"/>
</dbReference>
<dbReference type="InterPro" id="IPR050404">
    <property type="entry name" value="Heme-degrading_MO"/>
</dbReference>
<dbReference type="InterPro" id="IPR023953">
    <property type="entry name" value="IsdG"/>
</dbReference>
<dbReference type="NCBIfam" id="NF009839">
    <property type="entry name" value="PRK13314.1"/>
    <property type="match status" value="1"/>
</dbReference>
<dbReference type="PANTHER" id="PTHR34474:SF4">
    <property type="entry name" value="HEME OXYGENASE (STAPHYLOBILIN-PRODUCING) 1"/>
    <property type="match status" value="1"/>
</dbReference>
<dbReference type="PANTHER" id="PTHR34474">
    <property type="entry name" value="SIGNAL TRANSDUCTION PROTEIN TRAP"/>
    <property type="match status" value="1"/>
</dbReference>
<dbReference type="Pfam" id="PF03992">
    <property type="entry name" value="ABM"/>
    <property type="match status" value="1"/>
</dbReference>
<dbReference type="SUPFAM" id="SSF54909">
    <property type="entry name" value="Dimeric alpha+beta barrel"/>
    <property type="match status" value="1"/>
</dbReference>
<dbReference type="PROSITE" id="PS51725">
    <property type="entry name" value="ABM"/>
    <property type="match status" value="1"/>
</dbReference>
<sequence length="107" mass="12062">MIIVTNTAKITKGNGHKLIDRFNKVGQVETMPGFLGLEVLLTQNTVDYDEVTISTRWNAKEDFQGWTKSPAFKDAHSHQGGMPDYILDNKITYYNVEVVRMPMAAAQ</sequence>
<feature type="chain" id="PRO_0000270076" description="Heme-degrading monooxygenase">
    <location>
        <begin position="1"/>
        <end position="107"/>
    </location>
</feature>
<feature type="domain" description="ABM" evidence="1">
    <location>
        <begin position="2"/>
        <end position="94"/>
    </location>
</feature>
<feature type="binding site" evidence="1">
    <location>
        <position position="6"/>
    </location>
    <ligand>
        <name>Fe cation</name>
        <dbReference type="ChEBI" id="CHEBI:24875"/>
    </ligand>
</feature>
<feature type="binding site" description="axial binding residue" evidence="1">
    <location>
        <position position="76"/>
    </location>
    <ligand>
        <name>heme</name>
        <dbReference type="ChEBI" id="CHEBI:30413"/>
    </ligand>
    <ligandPart>
        <name>Fe</name>
        <dbReference type="ChEBI" id="CHEBI:18248"/>
    </ligandPart>
</feature>
<feature type="site" description="Transition state stabilizer" evidence="1">
    <location>
        <position position="66"/>
    </location>
</feature>
<gene>
    <name evidence="1" type="primary">isdG</name>
    <name type="ordered locus">BT9727_4276</name>
</gene>
<reference key="1">
    <citation type="journal article" date="2006" name="J. Bacteriol.">
        <title>Pathogenomic sequence analysis of Bacillus cereus and Bacillus thuringiensis isolates closely related to Bacillus anthracis.</title>
        <authorList>
            <person name="Han C.S."/>
            <person name="Xie G."/>
            <person name="Challacombe J.F."/>
            <person name="Altherr M.R."/>
            <person name="Bhotika S.S."/>
            <person name="Bruce D."/>
            <person name="Campbell C.S."/>
            <person name="Campbell M.L."/>
            <person name="Chen J."/>
            <person name="Chertkov O."/>
            <person name="Cleland C."/>
            <person name="Dimitrijevic M."/>
            <person name="Doggett N.A."/>
            <person name="Fawcett J.J."/>
            <person name="Glavina T."/>
            <person name="Goodwin L.A."/>
            <person name="Hill K.K."/>
            <person name="Hitchcock P."/>
            <person name="Jackson P.J."/>
            <person name="Keim P."/>
            <person name="Kewalramani A.R."/>
            <person name="Longmire J."/>
            <person name="Lucas S."/>
            <person name="Malfatti S."/>
            <person name="McMurry K."/>
            <person name="Meincke L.J."/>
            <person name="Misra M."/>
            <person name="Moseman B.L."/>
            <person name="Mundt M."/>
            <person name="Munk A.C."/>
            <person name="Okinaka R.T."/>
            <person name="Parson-Quintana B."/>
            <person name="Reilly L.P."/>
            <person name="Richardson P."/>
            <person name="Robinson D.L."/>
            <person name="Rubin E."/>
            <person name="Saunders E."/>
            <person name="Tapia R."/>
            <person name="Tesmer J.G."/>
            <person name="Thayer N."/>
            <person name="Thompson L.S."/>
            <person name="Tice H."/>
            <person name="Ticknor L.O."/>
            <person name="Wills P.L."/>
            <person name="Brettin T.S."/>
            <person name="Gilna P."/>
        </authorList>
    </citation>
    <scope>NUCLEOTIDE SEQUENCE [LARGE SCALE GENOMIC DNA]</scope>
    <source>
        <strain>97-27</strain>
    </source>
</reference>
<protein>
    <recommendedName>
        <fullName evidence="1">Heme-degrading monooxygenase</fullName>
        <ecNumber evidence="1">1.14.14.18</ecNumber>
    </recommendedName>
    <alternativeName>
        <fullName evidence="1">Heme oxygenase</fullName>
    </alternativeName>
    <alternativeName>
        <fullName evidence="1">Iron-regulated surface determinant</fullName>
    </alternativeName>
    <alternativeName>
        <fullName evidence="1">Iron-responsive surface determinant</fullName>
    </alternativeName>
</protein>
<keyword id="KW-0963">Cytoplasm</keyword>
<keyword id="KW-0349">Heme</keyword>
<keyword id="KW-0408">Iron</keyword>
<keyword id="KW-0479">Metal-binding</keyword>
<keyword id="KW-0503">Monooxygenase</keyword>
<keyword id="KW-0560">Oxidoreductase</keyword>
<organism>
    <name type="scientific">Bacillus thuringiensis subsp. konkukian (strain 97-27)</name>
    <dbReference type="NCBI Taxonomy" id="281309"/>
    <lineage>
        <taxon>Bacteria</taxon>
        <taxon>Bacillati</taxon>
        <taxon>Bacillota</taxon>
        <taxon>Bacilli</taxon>
        <taxon>Bacillales</taxon>
        <taxon>Bacillaceae</taxon>
        <taxon>Bacillus</taxon>
        <taxon>Bacillus cereus group</taxon>
    </lineage>
</organism>
<name>HDOX_BACHK</name>
<accession>Q6HCY5</accession>
<proteinExistence type="inferred from homology"/>
<evidence type="ECO:0000255" key="1">
    <source>
        <dbReference type="HAMAP-Rule" id="MF_01272"/>
    </source>
</evidence>